<accession>Q9LXQ6</accession>
<sequence>MDCLPDDLLVQILYLLPTKEAVSTSVLSKRWRTLFTRSDNLDFHDPISGRPEDILKSFNDFVDSSLAFQGGKHIKKFSLHTKIKTFEYHVLDRWICNALEHGVSELHLHLMHESWPWLFSIPSKVFNSSTLVKLSLGSRLYCPSFPPDTSLPALKVLLLDSILFRDDQLSNVFLAACPALEDLTIHHTYHPCVISSKSIKKLSLSVNSGYYGAGYILTLDTPSVVDLYYSDSPRHNAPLFHLDSLAKVTLDLHFIENNNREVQNDADVKNLIREICNVKTLHLTCSTVEVISVYCKGGLPMFNNLVELVFSSKKEGWRVLLPLLLENSPNLETLVLSDLHRYTFGRRHRFVGIPIPPNNQIKVLRIMQYQGSATVLKHISHFLLNMDCLEVMKVNVAAALDDPKKMQLTEDLLKLPTASCKLKIQVL</sequence>
<name>FB193_ARATH</name>
<organism>
    <name type="scientific">Arabidopsis thaliana</name>
    <name type="common">Mouse-ear cress</name>
    <dbReference type="NCBI Taxonomy" id="3702"/>
    <lineage>
        <taxon>Eukaryota</taxon>
        <taxon>Viridiplantae</taxon>
        <taxon>Streptophyta</taxon>
        <taxon>Embryophyta</taxon>
        <taxon>Tracheophyta</taxon>
        <taxon>Spermatophyta</taxon>
        <taxon>Magnoliopsida</taxon>
        <taxon>eudicotyledons</taxon>
        <taxon>Gunneridae</taxon>
        <taxon>Pentapetalae</taxon>
        <taxon>rosids</taxon>
        <taxon>malvids</taxon>
        <taxon>Brassicales</taxon>
        <taxon>Brassicaceae</taxon>
        <taxon>Camelineae</taxon>
        <taxon>Arabidopsis</taxon>
    </lineage>
</organism>
<feature type="chain" id="PRO_0000283463" description="Putative F-box protein At3g44060">
    <location>
        <begin position="1"/>
        <end position="427"/>
    </location>
</feature>
<feature type="domain" description="F-box" evidence="1">
    <location>
        <begin position="1"/>
        <end position="46"/>
    </location>
</feature>
<reference key="1">
    <citation type="journal article" date="2000" name="Nature">
        <title>Sequence and analysis of chromosome 3 of the plant Arabidopsis thaliana.</title>
        <authorList>
            <person name="Salanoubat M."/>
            <person name="Lemcke K."/>
            <person name="Rieger M."/>
            <person name="Ansorge W."/>
            <person name="Unseld M."/>
            <person name="Fartmann B."/>
            <person name="Valle G."/>
            <person name="Bloecker H."/>
            <person name="Perez-Alonso M."/>
            <person name="Obermaier B."/>
            <person name="Delseny M."/>
            <person name="Boutry M."/>
            <person name="Grivell L.A."/>
            <person name="Mache R."/>
            <person name="Puigdomenech P."/>
            <person name="De Simone V."/>
            <person name="Choisne N."/>
            <person name="Artiguenave F."/>
            <person name="Robert C."/>
            <person name="Brottier P."/>
            <person name="Wincker P."/>
            <person name="Cattolico L."/>
            <person name="Weissenbach J."/>
            <person name="Saurin W."/>
            <person name="Quetier F."/>
            <person name="Schaefer M."/>
            <person name="Mueller-Auer S."/>
            <person name="Gabel C."/>
            <person name="Fuchs M."/>
            <person name="Benes V."/>
            <person name="Wurmbach E."/>
            <person name="Drzonek H."/>
            <person name="Erfle H."/>
            <person name="Jordan N."/>
            <person name="Bangert S."/>
            <person name="Wiedelmann R."/>
            <person name="Kranz H."/>
            <person name="Voss H."/>
            <person name="Holland R."/>
            <person name="Brandt P."/>
            <person name="Nyakatura G."/>
            <person name="Vezzi A."/>
            <person name="D'Angelo M."/>
            <person name="Pallavicini A."/>
            <person name="Toppo S."/>
            <person name="Simionati B."/>
            <person name="Conrad A."/>
            <person name="Hornischer K."/>
            <person name="Kauer G."/>
            <person name="Loehnert T.-H."/>
            <person name="Nordsiek G."/>
            <person name="Reichelt J."/>
            <person name="Scharfe M."/>
            <person name="Schoen O."/>
            <person name="Bargues M."/>
            <person name="Terol J."/>
            <person name="Climent J."/>
            <person name="Navarro P."/>
            <person name="Collado C."/>
            <person name="Perez-Perez A."/>
            <person name="Ottenwaelder B."/>
            <person name="Duchemin D."/>
            <person name="Cooke R."/>
            <person name="Laudie M."/>
            <person name="Berger-Llauro C."/>
            <person name="Purnelle B."/>
            <person name="Masuy D."/>
            <person name="de Haan M."/>
            <person name="Maarse A.C."/>
            <person name="Alcaraz J.-P."/>
            <person name="Cottet A."/>
            <person name="Casacuberta E."/>
            <person name="Monfort A."/>
            <person name="Argiriou A."/>
            <person name="Flores M."/>
            <person name="Liguori R."/>
            <person name="Vitale D."/>
            <person name="Mannhaupt G."/>
            <person name="Haase D."/>
            <person name="Schoof H."/>
            <person name="Rudd S."/>
            <person name="Zaccaria P."/>
            <person name="Mewes H.-W."/>
            <person name="Mayer K.F.X."/>
            <person name="Kaul S."/>
            <person name="Town C.D."/>
            <person name="Koo H.L."/>
            <person name="Tallon L.J."/>
            <person name="Jenkins J."/>
            <person name="Rooney T."/>
            <person name="Rizzo M."/>
            <person name="Walts A."/>
            <person name="Utterback T."/>
            <person name="Fujii C.Y."/>
            <person name="Shea T.P."/>
            <person name="Creasy T.H."/>
            <person name="Haas B."/>
            <person name="Maiti R."/>
            <person name="Wu D."/>
            <person name="Peterson J."/>
            <person name="Van Aken S."/>
            <person name="Pai G."/>
            <person name="Militscher J."/>
            <person name="Sellers P."/>
            <person name="Gill J.E."/>
            <person name="Feldblyum T.V."/>
            <person name="Preuss D."/>
            <person name="Lin X."/>
            <person name="Nierman W.C."/>
            <person name="Salzberg S.L."/>
            <person name="White O."/>
            <person name="Venter J.C."/>
            <person name="Fraser C.M."/>
            <person name="Kaneko T."/>
            <person name="Nakamura Y."/>
            <person name="Sato S."/>
            <person name="Kato T."/>
            <person name="Asamizu E."/>
            <person name="Sasamoto S."/>
            <person name="Kimura T."/>
            <person name="Idesawa K."/>
            <person name="Kawashima K."/>
            <person name="Kishida Y."/>
            <person name="Kiyokawa C."/>
            <person name="Kohara M."/>
            <person name="Matsumoto M."/>
            <person name="Matsuno A."/>
            <person name="Muraki A."/>
            <person name="Nakayama S."/>
            <person name="Nakazaki N."/>
            <person name="Shinpo S."/>
            <person name="Takeuchi C."/>
            <person name="Wada T."/>
            <person name="Watanabe A."/>
            <person name="Yamada M."/>
            <person name="Yasuda M."/>
            <person name="Tabata S."/>
        </authorList>
    </citation>
    <scope>NUCLEOTIDE SEQUENCE [LARGE SCALE GENOMIC DNA]</scope>
    <source>
        <strain>cv. Columbia</strain>
    </source>
</reference>
<reference key="2">
    <citation type="journal article" date="2017" name="Plant J.">
        <title>Araport11: a complete reannotation of the Arabidopsis thaliana reference genome.</title>
        <authorList>
            <person name="Cheng C.Y."/>
            <person name="Krishnakumar V."/>
            <person name="Chan A.P."/>
            <person name="Thibaud-Nissen F."/>
            <person name="Schobel S."/>
            <person name="Town C.D."/>
        </authorList>
    </citation>
    <scope>GENOME REANNOTATION</scope>
    <source>
        <strain>cv. Columbia</strain>
    </source>
</reference>
<gene>
    <name type="ordered locus">At3g44060</name>
    <name type="ORF">F26G5.10</name>
</gene>
<evidence type="ECO:0000255" key="1">
    <source>
        <dbReference type="PROSITE-ProRule" id="PRU00080"/>
    </source>
</evidence>
<protein>
    <recommendedName>
        <fullName>Putative F-box protein At3g44060</fullName>
    </recommendedName>
</protein>
<dbReference type="EMBL" id="AL353814">
    <property type="protein sequence ID" value="CAB88414.1"/>
    <property type="molecule type" value="Genomic_DNA"/>
</dbReference>
<dbReference type="EMBL" id="CP002686">
    <property type="protein sequence ID" value="AEE77857.1"/>
    <property type="molecule type" value="Genomic_DNA"/>
</dbReference>
<dbReference type="PIR" id="T49122">
    <property type="entry name" value="T49122"/>
</dbReference>
<dbReference type="RefSeq" id="NP_189992.1">
    <property type="nucleotide sequence ID" value="NM_114274.1"/>
</dbReference>
<dbReference type="FunCoup" id="Q9LXQ6">
    <property type="interactions" value="146"/>
</dbReference>
<dbReference type="PaxDb" id="3702-AT3G44060.1"/>
<dbReference type="EnsemblPlants" id="AT3G44060.1">
    <property type="protein sequence ID" value="AT3G44060.1"/>
    <property type="gene ID" value="AT3G44060"/>
</dbReference>
<dbReference type="GeneID" id="823524"/>
<dbReference type="Gramene" id="AT3G44060.1">
    <property type="protein sequence ID" value="AT3G44060.1"/>
    <property type="gene ID" value="AT3G44060"/>
</dbReference>
<dbReference type="KEGG" id="ath:AT3G44060"/>
<dbReference type="Araport" id="AT3G44060"/>
<dbReference type="TAIR" id="AT3G44060"/>
<dbReference type="HOGENOM" id="CLU_010721_7_1_1"/>
<dbReference type="InParanoid" id="Q9LXQ6"/>
<dbReference type="OMA" id="MIARRRW"/>
<dbReference type="PhylomeDB" id="Q9LXQ6"/>
<dbReference type="PRO" id="PR:Q9LXQ6"/>
<dbReference type="Proteomes" id="UP000006548">
    <property type="component" value="Chromosome 3"/>
</dbReference>
<dbReference type="ExpressionAtlas" id="Q9LXQ6">
    <property type="expression patterns" value="baseline and differential"/>
</dbReference>
<dbReference type="CDD" id="cd22160">
    <property type="entry name" value="F-box_AtFBL13-like"/>
    <property type="match status" value="1"/>
</dbReference>
<dbReference type="Gene3D" id="1.20.1280.50">
    <property type="match status" value="1"/>
</dbReference>
<dbReference type="InterPro" id="IPR036047">
    <property type="entry name" value="F-box-like_dom_sf"/>
</dbReference>
<dbReference type="InterPro" id="IPR053781">
    <property type="entry name" value="F-box_AtFBL13-like"/>
</dbReference>
<dbReference type="InterPro" id="IPR001810">
    <property type="entry name" value="F-box_dom"/>
</dbReference>
<dbReference type="InterPro" id="IPR006566">
    <property type="entry name" value="FBD"/>
</dbReference>
<dbReference type="InterPro" id="IPR055294">
    <property type="entry name" value="FBL60-like"/>
</dbReference>
<dbReference type="InterPro" id="IPR055411">
    <property type="entry name" value="LRR_FXL15/At3g58940/PEG3-like"/>
</dbReference>
<dbReference type="PANTHER" id="PTHR31293">
    <property type="entry name" value="RNI-LIKE SUPERFAMILY PROTEIN"/>
    <property type="match status" value="1"/>
</dbReference>
<dbReference type="PANTHER" id="PTHR31293:SF12">
    <property type="entry name" value="RNI-LIKE SUPERFAMILY PROTEIN"/>
    <property type="match status" value="1"/>
</dbReference>
<dbReference type="Pfam" id="PF00646">
    <property type="entry name" value="F-box"/>
    <property type="match status" value="1"/>
</dbReference>
<dbReference type="Pfam" id="PF24758">
    <property type="entry name" value="LRR_At5g56370"/>
    <property type="match status" value="1"/>
</dbReference>
<dbReference type="SMART" id="SM00579">
    <property type="entry name" value="FBD"/>
    <property type="match status" value="1"/>
</dbReference>
<dbReference type="SMART" id="SM00256">
    <property type="entry name" value="FBOX"/>
    <property type="match status" value="1"/>
</dbReference>
<dbReference type="SUPFAM" id="SSF81383">
    <property type="entry name" value="F-box domain"/>
    <property type="match status" value="1"/>
</dbReference>
<dbReference type="SUPFAM" id="SSF52047">
    <property type="entry name" value="RNI-like"/>
    <property type="match status" value="1"/>
</dbReference>
<dbReference type="PROSITE" id="PS50181">
    <property type="entry name" value="FBOX"/>
    <property type="match status" value="1"/>
</dbReference>
<keyword id="KW-1185">Reference proteome</keyword>
<proteinExistence type="predicted"/>